<comment type="function">
    <text evidence="1">DNA ligase that catalyzes the formation of phosphodiester linkages between 5'-phosphoryl and 3'-hydroxyl groups in double-stranded DNA using NAD as a coenzyme and as the energy source for the reaction. It is essential for DNA replication and repair of damaged DNA.</text>
</comment>
<comment type="catalytic activity">
    <reaction evidence="1">
        <text>NAD(+) + (deoxyribonucleotide)n-3'-hydroxyl + 5'-phospho-(deoxyribonucleotide)m = (deoxyribonucleotide)n+m + AMP + beta-nicotinamide D-nucleotide.</text>
        <dbReference type="EC" id="6.5.1.2"/>
    </reaction>
</comment>
<comment type="cofactor">
    <cofactor evidence="1">
        <name>Mg(2+)</name>
        <dbReference type="ChEBI" id="CHEBI:18420"/>
    </cofactor>
    <cofactor evidence="1">
        <name>Mn(2+)</name>
        <dbReference type="ChEBI" id="CHEBI:29035"/>
    </cofactor>
</comment>
<comment type="similarity">
    <text evidence="1">Belongs to the NAD-dependent DNA ligase family. LigA subfamily.</text>
</comment>
<evidence type="ECO:0000255" key="1">
    <source>
        <dbReference type="HAMAP-Rule" id="MF_01588"/>
    </source>
</evidence>
<feature type="chain" id="PRO_0000313123" description="DNA ligase">
    <location>
        <begin position="1"/>
        <end position="669"/>
    </location>
</feature>
<feature type="domain" description="BRCT" evidence="1">
    <location>
        <begin position="591"/>
        <end position="669"/>
    </location>
</feature>
<feature type="active site" description="N6-AMP-lysine intermediate" evidence="1">
    <location>
        <position position="116"/>
    </location>
</feature>
<feature type="binding site" evidence="1">
    <location>
        <begin position="34"/>
        <end position="38"/>
    </location>
    <ligand>
        <name>NAD(+)</name>
        <dbReference type="ChEBI" id="CHEBI:57540"/>
    </ligand>
</feature>
<feature type="binding site" evidence="1">
    <location>
        <begin position="83"/>
        <end position="84"/>
    </location>
    <ligand>
        <name>NAD(+)</name>
        <dbReference type="ChEBI" id="CHEBI:57540"/>
    </ligand>
</feature>
<feature type="binding site" evidence="1">
    <location>
        <position position="114"/>
    </location>
    <ligand>
        <name>NAD(+)</name>
        <dbReference type="ChEBI" id="CHEBI:57540"/>
    </ligand>
</feature>
<feature type="binding site" evidence="1">
    <location>
        <position position="137"/>
    </location>
    <ligand>
        <name>NAD(+)</name>
        <dbReference type="ChEBI" id="CHEBI:57540"/>
    </ligand>
</feature>
<feature type="binding site" evidence="1">
    <location>
        <position position="171"/>
    </location>
    <ligand>
        <name>NAD(+)</name>
        <dbReference type="ChEBI" id="CHEBI:57540"/>
    </ligand>
</feature>
<feature type="binding site" evidence="1">
    <location>
        <position position="287"/>
    </location>
    <ligand>
        <name>NAD(+)</name>
        <dbReference type="ChEBI" id="CHEBI:57540"/>
    </ligand>
</feature>
<feature type="binding site" evidence="1">
    <location>
        <position position="311"/>
    </location>
    <ligand>
        <name>NAD(+)</name>
        <dbReference type="ChEBI" id="CHEBI:57540"/>
    </ligand>
</feature>
<feature type="binding site" evidence="1">
    <location>
        <position position="405"/>
    </location>
    <ligand>
        <name>Zn(2+)</name>
        <dbReference type="ChEBI" id="CHEBI:29105"/>
    </ligand>
</feature>
<feature type="binding site" evidence="1">
    <location>
        <position position="408"/>
    </location>
    <ligand>
        <name>Zn(2+)</name>
        <dbReference type="ChEBI" id="CHEBI:29105"/>
    </ligand>
</feature>
<feature type="binding site" evidence="1">
    <location>
        <position position="423"/>
    </location>
    <ligand>
        <name>Zn(2+)</name>
        <dbReference type="ChEBI" id="CHEBI:29105"/>
    </ligand>
</feature>
<feature type="binding site" evidence="1">
    <location>
        <position position="428"/>
    </location>
    <ligand>
        <name>Zn(2+)</name>
        <dbReference type="ChEBI" id="CHEBI:29105"/>
    </ligand>
</feature>
<gene>
    <name evidence="1" type="primary">ligA</name>
    <name type="ordered locus">BCE_0335</name>
</gene>
<organism>
    <name type="scientific">Bacillus cereus (strain ATCC 10987 / NRS 248)</name>
    <dbReference type="NCBI Taxonomy" id="222523"/>
    <lineage>
        <taxon>Bacteria</taxon>
        <taxon>Bacillati</taxon>
        <taxon>Bacillota</taxon>
        <taxon>Bacilli</taxon>
        <taxon>Bacillales</taxon>
        <taxon>Bacillaceae</taxon>
        <taxon>Bacillus</taxon>
        <taxon>Bacillus cereus group</taxon>
    </lineage>
</organism>
<reference key="1">
    <citation type="journal article" date="2004" name="Nucleic Acids Res.">
        <title>The genome sequence of Bacillus cereus ATCC 10987 reveals metabolic adaptations and a large plasmid related to Bacillus anthracis pXO1.</title>
        <authorList>
            <person name="Rasko D.A."/>
            <person name="Ravel J."/>
            <person name="Oekstad O.A."/>
            <person name="Helgason E."/>
            <person name="Cer R.Z."/>
            <person name="Jiang L."/>
            <person name="Shores K.A."/>
            <person name="Fouts D.E."/>
            <person name="Tourasse N.J."/>
            <person name="Angiuoli S.V."/>
            <person name="Kolonay J.F."/>
            <person name="Nelson W.C."/>
            <person name="Kolstoe A.-B."/>
            <person name="Fraser C.M."/>
            <person name="Read T.D."/>
        </authorList>
    </citation>
    <scope>NUCLEOTIDE SEQUENCE [LARGE SCALE GENOMIC DNA]</scope>
    <source>
        <strain>ATCC 10987 / NRS 248</strain>
    </source>
</reference>
<dbReference type="EC" id="6.5.1.2" evidence="1"/>
<dbReference type="EMBL" id="AE017194">
    <property type="protein sequence ID" value="AAS39271.1"/>
    <property type="molecule type" value="Genomic_DNA"/>
</dbReference>
<dbReference type="SMR" id="Q73EM3"/>
<dbReference type="KEGG" id="bca:BCE_0335"/>
<dbReference type="HOGENOM" id="CLU_007764_2_1_9"/>
<dbReference type="Proteomes" id="UP000002527">
    <property type="component" value="Chromosome"/>
</dbReference>
<dbReference type="GO" id="GO:0005829">
    <property type="term" value="C:cytosol"/>
    <property type="evidence" value="ECO:0007669"/>
    <property type="project" value="TreeGrafter"/>
</dbReference>
<dbReference type="GO" id="GO:0003677">
    <property type="term" value="F:DNA binding"/>
    <property type="evidence" value="ECO:0007669"/>
    <property type="project" value="InterPro"/>
</dbReference>
<dbReference type="GO" id="GO:0003911">
    <property type="term" value="F:DNA ligase (NAD+) activity"/>
    <property type="evidence" value="ECO:0007669"/>
    <property type="project" value="UniProtKB-UniRule"/>
</dbReference>
<dbReference type="GO" id="GO:0046872">
    <property type="term" value="F:metal ion binding"/>
    <property type="evidence" value="ECO:0007669"/>
    <property type="project" value="UniProtKB-KW"/>
</dbReference>
<dbReference type="GO" id="GO:0006281">
    <property type="term" value="P:DNA repair"/>
    <property type="evidence" value="ECO:0007669"/>
    <property type="project" value="UniProtKB-KW"/>
</dbReference>
<dbReference type="GO" id="GO:0006260">
    <property type="term" value="P:DNA replication"/>
    <property type="evidence" value="ECO:0007669"/>
    <property type="project" value="UniProtKB-KW"/>
</dbReference>
<dbReference type="CDD" id="cd17748">
    <property type="entry name" value="BRCT_DNA_ligase_like"/>
    <property type="match status" value="1"/>
</dbReference>
<dbReference type="CDD" id="cd00114">
    <property type="entry name" value="LIGANc"/>
    <property type="match status" value="1"/>
</dbReference>
<dbReference type="FunFam" id="1.10.150.20:FF:000006">
    <property type="entry name" value="DNA ligase"/>
    <property type="match status" value="1"/>
</dbReference>
<dbReference type="FunFam" id="1.10.150.20:FF:000007">
    <property type="entry name" value="DNA ligase"/>
    <property type="match status" value="1"/>
</dbReference>
<dbReference type="FunFam" id="1.10.287.610:FF:000002">
    <property type="entry name" value="DNA ligase"/>
    <property type="match status" value="1"/>
</dbReference>
<dbReference type="FunFam" id="2.40.50.140:FF:000012">
    <property type="entry name" value="DNA ligase"/>
    <property type="match status" value="1"/>
</dbReference>
<dbReference type="FunFam" id="3.30.470.30:FF:000001">
    <property type="entry name" value="DNA ligase"/>
    <property type="match status" value="1"/>
</dbReference>
<dbReference type="FunFam" id="3.40.50.10190:FF:000026">
    <property type="entry name" value="DNA ligase"/>
    <property type="match status" value="1"/>
</dbReference>
<dbReference type="FunFam" id="6.20.10.30:FF:000002">
    <property type="entry name" value="DNA ligase"/>
    <property type="match status" value="1"/>
</dbReference>
<dbReference type="Gene3D" id="6.20.10.30">
    <property type="match status" value="1"/>
</dbReference>
<dbReference type="Gene3D" id="1.10.150.20">
    <property type="entry name" value="5' to 3' exonuclease, C-terminal subdomain"/>
    <property type="match status" value="2"/>
</dbReference>
<dbReference type="Gene3D" id="3.40.50.10190">
    <property type="entry name" value="BRCT domain"/>
    <property type="match status" value="1"/>
</dbReference>
<dbReference type="Gene3D" id="3.30.470.30">
    <property type="entry name" value="DNA ligase/mRNA capping enzyme"/>
    <property type="match status" value="1"/>
</dbReference>
<dbReference type="Gene3D" id="1.10.287.610">
    <property type="entry name" value="Helix hairpin bin"/>
    <property type="match status" value="1"/>
</dbReference>
<dbReference type="Gene3D" id="2.40.50.140">
    <property type="entry name" value="Nucleic acid-binding proteins"/>
    <property type="match status" value="1"/>
</dbReference>
<dbReference type="HAMAP" id="MF_01588">
    <property type="entry name" value="DNA_ligase_A"/>
    <property type="match status" value="1"/>
</dbReference>
<dbReference type="InterPro" id="IPR001357">
    <property type="entry name" value="BRCT_dom"/>
</dbReference>
<dbReference type="InterPro" id="IPR036420">
    <property type="entry name" value="BRCT_dom_sf"/>
</dbReference>
<dbReference type="InterPro" id="IPR041663">
    <property type="entry name" value="DisA/LigA_HHH"/>
</dbReference>
<dbReference type="InterPro" id="IPR001679">
    <property type="entry name" value="DNA_ligase"/>
</dbReference>
<dbReference type="InterPro" id="IPR018239">
    <property type="entry name" value="DNA_ligase_AS"/>
</dbReference>
<dbReference type="InterPro" id="IPR033136">
    <property type="entry name" value="DNA_ligase_CS"/>
</dbReference>
<dbReference type="InterPro" id="IPR013839">
    <property type="entry name" value="DNAligase_adenylation"/>
</dbReference>
<dbReference type="InterPro" id="IPR013840">
    <property type="entry name" value="DNAligase_N"/>
</dbReference>
<dbReference type="InterPro" id="IPR003583">
    <property type="entry name" value="Hlx-hairpin-Hlx_DNA-bd_motif"/>
</dbReference>
<dbReference type="InterPro" id="IPR012340">
    <property type="entry name" value="NA-bd_OB-fold"/>
</dbReference>
<dbReference type="InterPro" id="IPR004150">
    <property type="entry name" value="NAD_DNA_ligase_OB"/>
</dbReference>
<dbReference type="InterPro" id="IPR010994">
    <property type="entry name" value="RuvA_2-like"/>
</dbReference>
<dbReference type="InterPro" id="IPR004149">
    <property type="entry name" value="Znf_DNAligase_C4"/>
</dbReference>
<dbReference type="NCBIfam" id="TIGR00575">
    <property type="entry name" value="dnlj"/>
    <property type="match status" value="1"/>
</dbReference>
<dbReference type="NCBIfam" id="NF005932">
    <property type="entry name" value="PRK07956.1"/>
    <property type="match status" value="1"/>
</dbReference>
<dbReference type="PANTHER" id="PTHR23389">
    <property type="entry name" value="CHROMOSOME TRANSMISSION FIDELITY FACTOR 18"/>
    <property type="match status" value="1"/>
</dbReference>
<dbReference type="PANTHER" id="PTHR23389:SF9">
    <property type="entry name" value="DNA LIGASE"/>
    <property type="match status" value="1"/>
</dbReference>
<dbReference type="Pfam" id="PF00533">
    <property type="entry name" value="BRCT"/>
    <property type="match status" value="1"/>
</dbReference>
<dbReference type="Pfam" id="PF01653">
    <property type="entry name" value="DNA_ligase_aden"/>
    <property type="match status" value="1"/>
</dbReference>
<dbReference type="Pfam" id="PF03120">
    <property type="entry name" value="DNA_ligase_OB"/>
    <property type="match status" value="1"/>
</dbReference>
<dbReference type="Pfam" id="PF03119">
    <property type="entry name" value="DNA_ligase_ZBD"/>
    <property type="match status" value="1"/>
</dbReference>
<dbReference type="Pfam" id="PF12826">
    <property type="entry name" value="HHH_2"/>
    <property type="match status" value="1"/>
</dbReference>
<dbReference type="Pfam" id="PF14520">
    <property type="entry name" value="HHH_5"/>
    <property type="match status" value="1"/>
</dbReference>
<dbReference type="Pfam" id="PF22745">
    <property type="entry name" value="Nlig-Ia"/>
    <property type="match status" value="1"/>
</dbReference>
<dbReference type="PIRSF" id="PIRSF001604">
    <property type="entry name" value="LigA"/>
    <property type="match status" value="1"/>
</dbReference>
<dbReference type="SMART" id="SM00292">
    <property type="entry name" value="BRCT"/>
    <property type="match status" value="1"/>
</dbReference>
<dbReference type="SMART" id="SM00278">
    <property type="entry name" value="HhH1"/>
    <property type="match status" value="3"/>
</dbReference>
<dbReference type="SMART" id="SM00532">
    <property type="entry name" value="LIGANc"/>
    <property type="match status" value="1"/>
</dbReference>
<dbReference type="SUPFAM" id="SSF52113">
    <property type="entry name" value="BRCT domain"/>
    <property type="match status" value="1"/>
</dbReference>
<dbReference type="SUPFAM" id="SSF56091">
    <property type="entry name" value="DNA ligase/mRNA capping enzyme, catalytic domain"/>
    <property type="match status" value="1"/>
</dbReference>
<dbReference type="SUPFAM" id="SSF50249">
    <property type="entry name" value="Nucleic acid-binding proteins"/>
    <property type="match status" value="1"/>
</dbReference>
<dbReference type="SUPFAM" id="SSF47781">
    <property type="entry name" value="RuvA domain 2-like"/>
    <property type="match status" value="1"/>
</dbReference>
<dbReference type="PROSITE" id="PS50172">
    <property type="entry name" value="BRCT"/>
    <property type="match status" value="1"/>
</dbReference>
<dbReference type="PROSITE" id="PS01055">
    <property type="entry name" value="DNA_LIGASE_N1"/>
    <property type="match status" value="1"/>
</dbReference>
<dbReference type="PROSITE" id="PS01056">
    <property type="entry name" value="DNA_LIGASE_N2"/>
    <property type="match status" value="1"/>
</dbReference>
<protein>
    <recommendedName>
        <fullName evidence="1">DNA ligase</fullName>
        <ecNumber evidence="1">6.5.1.2</ecNumber>
    </recommendedName>
    <alternativeName>
        <fullName evidence="1">Polydeoxyribonucleotide synthase [NAD(+)]</fullName>
    </alternativeName>
</protein>
<sequence>MSKEIAKKRIEELRDLLNTFNYQYHVLDNPSVSDAEYDRNMQELIKLEAENPEFMSEDSPSVRVGGTVLDIFEKVTHKSPMLSLGNAFNEGDLRDFDRRVRQGIDDVNVRYICELKIDGLAVSLHYEKGRFIQGATRGDGVTGEDITQNLKTIKAIPLRLNEEVTLEARGEAYMPKRSFVKLNEEKEQNGEDVFANPRNAAAGSIRQLDPKIAAKRNLSMFVYGLANVEEKTILSHSESLDFLGELGFKTNPNRRTCETIEEVIAYVEEWQEKRPHLDYEIDGIVIKVDDVALQESLGTTAKSPRWAIAYKFPAEEVVTRLTGIELSVGRTGVVTPTAELEPVRVAGTIVRRASLHNEDLIREKDIRIGDYVVVKKAGDIIPEVVNVIFDKRTGEEEEYHMPTHCPACESELVRLEEEVALRCINPTCPAQIREGLIHFVSRNAMNIDGLGERVITQLFEADYIRTFADLYSLTKEQLLQLERFGEKSATNLVKAIENSKENSLERLLFGLGIRHVGAKAARTFAEHFETMDALVKATEEELKAINEIGEKMAQSVVTYFDNEDVLELLQQFKEYGVNMTYKGMKIADLQNVESYFAGKTVVLTGKLEVMGRSEAKKKIEALGGKVTGSVSKSTDLVVAGEAAGSKLAQAEKHNVEVWNEERFLQELNK</sequence>
<keyword id="KW-0227">DNA damage</keyword>
<keyword id="KW-0234">DNA repair</keyword>
<keyword id="KW-0235">DNA replication</keyword>
<keyword id="KW-0436">Ligase</keyword>
<keyword id="KW-0460">Magnesium</keyword>
<keyword id="KW-0464">Manganese</keyword>
<keyword id="KW-0479">Metal-binding</keyword>
<keyword id="KW-0520">NAD</keyword>
<keyword id="KW-0862">Zinc</keyword>
<name>DNLJ_BACC1</name>
<accession>Q73EM3</accession>
<proteinExistence type="inferred from homology"/>